<comment type="function">
    <text evidence="1">Plays an important role in the de novo pathway of purine nucleotide biosynthesis. Catalyzes the first committed step in the biosynthesis of AMP from IMP.</text>
</comment>
<comment type="catalytic activity">
    <reaction evidence="1">
        <text>IMP + L-aspartate + GTP = N(6)-(1,2-dicarboxyethyl)-AMP + GDP + phosphate + 2 H(+)</text>
        <dbReference type="Rhea" id="RHEA:15753"/>
        <dbReference type="ChEBI" id="CHEBI:15378"/>
        <dbReference type="ChEBI" id="CHEBI:29991"/>
        <dbReference type="ChEBI" id="CHEBI:37565"/>
        <dbReference type="ChEBI" id="CHEBI:43474"/>
        <dbReference type="ChEBI" id="CHEBI:57567"/>
        <dbReference type="ChEBI" id="CHEBI:58053"/>
        <dbReference type="ChEBI" id="CHEBI:58189"/>
        <dbReference type="EC" id="6.3.4.4"/>
    </reaction>
</comment>
<comment type="cofactor">
    <cofactor evidence="1">
        <name>Mg(2+)</name>
        <dbReference type="ChEBI" id="CHEBI:18420"/>
    </cofactor>
    <text evidence="1">Binds 1 Mg(2+) ion per subunit.</text>
</comment>
<comment type="pathway">
    <text evidence="1">Purine metabolism; AMP biosynthesis via de novo pathway; AMP from IMP: step 1/2.</text>
</comment>
<comment type="subunit">
    <text evidence="1">Homodimer.</text>
</comment>
<comment type="subcellular location">
    <subcellularLocation>
        <location evidence="1">Cytoplasm</location>
    </subcellularLocation>
</comment>
<comment type="similarity">
    <text evidence="1">Belongs to the adenylosuccinate synthetase family.</text>
</comment>
<feature type="chain" id="PRO_0000321801" description="Adenylosuccinate synthetase">
    <location>
        <begin position="1"/>
        <end position="444"/>
    </location>
</feature>
<feature type="active site" description="Proton acceptor" evidence="1">
    <location>
        <position position="20"/>
    </location>
</feature>
<feature type="active site" description="Proton donor" evidence="1">
    <location>
        <position position="48"/>
    </location>
</feature>
<feature type="binding site" evidence="1">
    <location>
        <begin position="19"/>
        <end position="25"/>
    </location>
    <ligand>
        <name>GTP</name>
        <dbReference type="ChEBI" id="CHEBI:37565"/>
    </ligand>
</feature>
<feature type="binding site" description="in other chain" evidence="1">
    <location>
        <begin position="20"/>
        <end position="23"/>
    </location>
    <ligand>
        <name>IMP</name>
        <dbReference type="ChEBI" id="CHEBI:58053"/>
        <note>ligand shared between dimeric partners</note>
    </ligand>
</feature>
<feature type="binding site" evidence="1">
    <location>
        <position position="20"/>
    </location>
    <ligand>
        <name>Mg(2+)</name>
        <dbReference type="ChEBI" id="CHEBI:18420"/>
    </ligand>
</feature>
<feature type="binding site" description="in other chain" evidence="1">
    <location>
        <begin position="45"/>
        <end position="48"/>
    </location>
    <ligand>
        <name>IMP</name>
        <dbReference type="ChEBI" id="CHEBI:58053"/>
        <note>ligand shared between dimeric partners</note>
    </ligand>
</feature>
<feature type="binding site" evidence="1">
    <location>
        <begin position="47"/>
        <end position="49"/>
    </location>
    <ligand>
        <name>GTP</name>
        <dbReference type="ChEBI" id="CHEBI:37565"/>
    </ligand>
</feature>
<feature type="binding site" evidence="1">
    <location>
        <position position="47"/>
    </location>
    <ligand>
        <name>Mg(2+)</name>
        <dbReference type="ChEBI" id="CHEBI:18420"/>
    </ligand>
</feature>
<feature type="binding site" description="in other chain" evidence="1">
    <location>
        <position position="139"/>
    </location>
    <ligand>
        <name>IMP</name>
        <dbReference type="ChEBI" id="CHEBI:58053"/>
        <note>ligand shared between dimeric partners</note>
    </ligand>
</feature>
<feature type="binding site" evidence="1">
    <location>
        <position position="153"/>
    </location>
    <ligand>
        <name>IMP</name>
        <dbReference type="ChEBI" id="CHEBI:58053"/>
        <note>ligand shared between dimeric partners</note>
    </ligand>
</feature>
<feature type="binding site" description="in other chain" evidence="1">
    <location>
        <position position="234"/>
    </location>
    <ligand>
        <name>IMP</name>
        <dbReference type="ChEBI" id="CHEBI:58053"/>
        <note>ligand shared between dimeric partners</note>
    </ligand>
</feature>
<feature type="binding site" description="in other chain" evidence="1">
    <location>
        <position position="249"/>
    </location>
    <ligand>
        <name>IMP</name>
        <dbReference type="ChEBI" id="CHEBI:58053"/>
        <note>ligand shared between dimeric partners</note>
    </ligand>
</feature>
<feature type="binding site" evidence="1">
    <location>
        <begin position="313"/>
        <end position="319"/>
    </location>
    <ligand>
        <name>substrate</name>
    </ligand>
</feature>
<feature type="binding site" description="in other chain" evidence="1">
    <location>
        <position position="317"/>
    </location>
    <ligand>
        <name>IMP</name>
        <dbReference type="ChEBI" id="CHEBI:58053"/>
        <note>ligand shared between dimeric partners</note>
    </ligand>
</feature>
<feature type="binding site" evidence="1">
    <location>
        <position position="319"/>
    </location>
    <ligand>
        <name>GTP</name>
        <dbReference type="ChEBI" id="CHEBI:37565"/>
    </ligand>
</feature>
<feature type="binding site" evidence="1">
    <location>
        <begin position="345"/>
        <end position="347"/>
    </location>
    <ligand>
        <name>GTP</name>
        <dbReference type="ChEBI" id="CHEBI:37565"/>
    </ligand>
</feature>
<feature type="binding site" evidence="1">
    <location>
        <begin position="427"/>
        <end position="429"/>
    </location>
    <ligand>
        <name>GTP</name>
        <dbReference type="ChEBI" id="CHEBI:37565"/>
    </ligand>
</feature>
<proteinExistence type="inferred from homology"/>
<organism>
    <name type="scientific">Methylibium petroleiphilum (strain ATCC BAA-1232 / LMG 22953 / PM1)</name>
    <dbReference type="NCBI Taxonomy" id="420662"/>
    <lineage>
        <taxon>Bacteria</taxon>
        <taxon>Pseudomonadati</taxon>
        <taxon>Pseudomonadota</taxon>
        <taxon>Betaproteobacteria</taxon>
        <taxon>Burkholderiales</taxon>
        <taxon>Sphaerotilaceae</taxon>
        <taxon>Methylibium</taxon>
    </lineage>
</organism>
<evidence type="ECO:0000255" key="1">
    <source>
        <dbReference type="HAMAP-Rule" id="MF_00011"/>
    </source>
</evidence>
<reference key="1">
    <citation type="journal article" date="2007" name="J. Bacteriol.">
        <title>Whole-genome analysis of the methyl tert-butyl ether-degrading beta-proteobacterium Methylibium petroleiphilum PM1.</title>
        <authorList>
            <person name="Kane S.R."/>
            <person name="Chakicherla A.Y."/>
            <person name="Chain P.S.G."/>
            <person name="Schmidt R."/>
            <person name="Shin M.W."/>
            <person name="Legler T.C."/>
            <person name="Scow K.M."/>
            <person name="Larimer F.W."/>
            <person name="Lucas S.M."/>
            <person name="Richardson P.M."/>
            <person name="Hristova K.R."/>
        </authorList>
    </citation>
    <scope>NUCLEOTIDE SEQUENCE [LARGE SCALE GENOMIC DNA]</scope>
    <source>
        <strain>ATCC BAA-1232 / LMG 22953 / PM1</strain>
    </source>
</reference>
<name>PURA_METPP</name>
<sequence>MQAASKAGHNVVVVGTQWGDEGKGKVVDWLTDHAAAVVRFQGGHNAGHTLVIKGKKTALQLIPSGVMRDGVACYIGNGVVVDPAHLLGEIERLEAAGVEVRSRLFISESCPLILPFHVEVDKAREALRESSGAGKIGTTGKGIGPAYEDKVARRALRVQDLKHPDRFAKKLRDLLELHNFVLQGFLKAEALEFPPIFDHAMNVAEQLKPMLADVGVRIHETNLAGGSVLFEGAQGTLLDIDHGTYPYVTSSNCVAGNAAAGSGVGPDKLHYILGITKAYTTRVGSGPFPTELPMDEPGTVGHHLSTVGQERGTVTGRPRRCGWLDAAAMKRSILINGLTGLCITKLDVLDGLTEIKMGVGYELDGRRIDILPLDADEIVACKPVYESFPGWTGSTVGTTRWDDLPLNARRYLERVQEVIGAPIDMVSTGPDREHTILLRHPYQG</sequence>
<keyword id="KW-0963">Cytoplasm</keyword>
<keyword id="KW-0342">GTP-binding</keyword>
<keyword id="KW-0436">Ligase</keyword>
<keyword id="KW-0460">Magnesium</keyword>
<keyword id="KW-0479">Metal-binding</keyword>
<keyword id="KW-0547">Nucleotide-binding</keyword>
<keyword id="KW-0658">Purine biosynthesis</keyword>
<keyword id="KW-1185">Reference proteome</keyword>
<gene>
    <name evidence="1" type="primary">purA</name>
    <name type="ordered locus">Mpe_A1985</name>
</gene>
<accession>A2SHA4</accession>
<protein>
    <recommendedName>
        <fullName evidence="1">Adenylosuccinate synthetase</fullName>
        <shortName evidence="1">AMPSase</shortName>
        <shortName evidence="1">AdSS</shortName>
        <ecNumber evidence="1">6.3.4.4</ecNumber>
    </recommendedName>
    <alternativeName>
        <fullName evidence="1">IMP--aspartate ligase</fullName>
    </alternativeName>
</protein>
<dbReference type="EC" id="6.3.4.4" evidence="1"/>
<dbReference type="EMBL" id="CP000555">
    <property type="protein sequence ID" value="ABM94943.1"/>
    <property type="molecule type" value="Genomic_DNA"/>
</dbReference>
<dbReference type="RefSeq" id="WP_011829580.1">
    <property type="nucleotide sequence ID" value="NC_008825.1"/>
</dbReference>
<dbReference type="SMR" id="A2SHA4"/>
<dbReference type="STRING" id="420662.Mpe_A1985"/>
<dbReference type="KEGG" id="mpt:Mpe_A1985"/>
<dbReference type="eggNOG" id="COG0104">
    <property type="taxonomic scope" value="Bacteria"/>
</dbReference>
<dbReference type="HOGENOM" id="CLU_029848_0_0_4"/>
<dbReference type="UniPathway" id="UPA00075">
    <property type="reaction ID" value="UER00335"/>
</dbReference>
<dbReference type="Proteomes" id="UP000000366">
    <property type="component" value="Chromosome"/>
</dbReference>
<dbReference type="GO" id="GO:0005737">
    <property type="term" value="C:cytoplasm"/>
    <property type="evidence" value="ECO:0007669"/>
    <property type="project" value="UniProtKB-SubCell"/>
</dbReference>
<dbReference type="GO" id="GO:0004019">
    <property type="term" value="F:adenylosuccinate synthase activity"/>
    <property type="evidence" value="ECO:0007669"/>
    <property type="project" value="UniProtKB-UniRule"/>
</dbReference>
<dbReference type="GO" id="GO:0005525">
    <property type="term" value="F:GTP binding"/>
    <property type="evidence" value="ECO:0007669"/>
    <property type="project" value="UniProtKB-UniRule"/>
</dbReference>
<dbReference type="GO" id="GO:0000287">
    <property type="term" value="F:magnesium ion binding"/>
    <property type="evidence" value="ECO:0007669"/>
    <property type="project" value="UniProtKB-UniRule"/>
</dbReference>
<dbReference type="GO" id="GO:0044208">
    <property type="term" value="P:'de novo' AMP biosynthetic process"/>
    <property type="evidence" value="ECO:0007669"/>
    <property type="project" value="UniProtKB-UniRule"/>
</dbReference>
<dbReference type="GO" id="GO:0046040">
    <property type="term" value="P:IMP metabolic process"/>
    <property type="evidence" value="ECO:0007669"/>
    <property type="project" value="TreeGrafter"/>
</dbReference>
<dbReference type="CDD" id="cd03108">
    <property type="entry name" value="AdSS"/>
    <property type="match status" value="1"/>
</dbReference>
<dbReference type="FunFam" id="1.10.300.10:FF:000001">
    <property type="entry name" value="Adenylosuccinate synthetase"/>
    <property type="match status" value="1"/>
</dbReference>
<dbReference type="FunFam" id="3.90.170.10:FF:000001">
    <property type="entry name" value="Adenylosuccinate synthetase"/>
    <property type="match status" value="1"/>
</dbReference>
<dbReference type="Gene3D" id="3.40.440.10">
    <property type="entry name" value="Adenylosuccinate Synthetase, subunit A, domain 1"/>
    <property type="match status" value="1"/>
</dbReference>
<dbReference type="Gene3D" id="1.10.300.10">
    <property type="entry name" value="Adenylosuccinate Synthetase, subunit A, domain 2"/>
    <property type="match status" value="1"/>
</dbReference>
<dbReference type="Gene3D" id="3.90.170.10">
    <property type="entry name" value="Adenylosuccinate Synthetase, subunit A, domain 3"/>
    <property type="match status" value="1"/>
</dbReference>
<dbReference type="HAMAP" id="MF_00011">
    <property type="entry name" value="Adenylosucc_synth"/>
    <property type="match status" value="1"/>
</dbReference>
<dbReference type="InterPro" id="IPR018220">
    <property type="entry name" value="Adenylosuccin_syn_GTP-bd"/>
</dbReference>
<dbReference type="InterPro" id="IPR033128">
    <property type="entry name" value="Adenylosuccin_syn_Lys_AS"/>
</dbReference>
<dbReference type="InterPro" id="IPR042109">
    <property type="entry name" value="Adenylosuccinate_synth_dom1"/>
</dbReference>
<dbReference type="InterPro" id="IPR042110">
    <property type="entry name" value="Adenylosuccinate_synth_dom2"/>
</dbReference>
<dbReference type="InterPro" id="IPR042111">
    <property type="entry name" value="Adenylosuccinate_synth_dom3"/>
</dbReference>
<dbReference type="InterPro" id="IPR001114">
    <property type="entry name" value="Adenylosuccinate_synthetase"/>
</dbReference>
<dbReference type="InterPro" id="IPR027417">
    <property type="entry name" value="P-loop_NTPase"/>
</dbReference>
<dbReference type="NCBIfam" id="NF002223">
    <property type="entry name" value="PRK01117.1"/>
    <property type="match status" value="1"/>
</dbReference>
<dbReference type="NCBIfam" id="TIGR00184">
    <property type="entry name" value="purA"/>
    <property type="match status" value="1"/>
</dbReference>
<dbReference type="PANTHER" id="PTHR11846">
    <property type="entry name" value="ADENYLOSUCCINATE SYNTHETASE"/>
    <property type="match status" value="1"/>
</dbReference>
<dbReference type="PANTHER" id="PTHR11846:SF0">
    <property type="entry name" value="ADENYLOSUCCINATE SYNTHETASE"/>
    <property type="match status" value="1"/>
</dbReference>
<dbReference type="Pfam" id="PF00709">
    <property type="entry name" value="Adenylsucc_synt"/>
    <property type="match status" value="1"/>
</dbReference>
<dbReference type="SMART" id="SM00788">
    <property type="entry name" value="Adenylsucc_synt"/>
    <property type="match status" value="1"/>
</dbReference>
<dbReference type="SUPFAM" id="SSF52540">
    <property type="entry name" value="P-loop containing nucleoside triphosphate hydrolases"/>
    <property type="match status" value="1"/>
</dbReference>
<dbReference type="PROSITE" id="PS01266">
    <property type="entry name" value="ADENYLOSUCCIN_SYN_1"/>
    <property type="match status" value="1"/>
</dbReference>
<dbReference type="PROSITE" id="PS00513">
    <property type="entry name" value="ADENYLOSUCCIN_SYN_2"/>
    <property type="match status" value="1"/>
</dbReference>